<accession>P45876</accession>
<accession>C7CG47</accession>
<reference key="1">
    <citation type="journal article" date="1991" name="J. Bacteriol.">
        <title>Identification of dcmR, the regulatory gene governing expression of dichloromethane dehalogenase in Methylobacterium sp. strain DM4.</title>
        <authorList>
            <person name="la Roche S.D."/>
            <person name="Leisinger T."/>
        </authorList>
    </citation>
    <scope>NUCLEOTIDE SEQUENCE [GENOMIC DNA]</scope>
</reference>
<reference key="2">
    <citation type="journal article" date="2009" name="PLoS ONE">
        <title>Methylobacterium genome sequences: a reference blueprint to investigate microbial metabolism of C1 compounds from natural and industrial sources.</title>
        <authorList>
            <person name="Vuilleumier S."/>
            <person name="Chistoserdova L."/>
            <person name="Lee M.-C."/>
            <person name="Bringel F."/>
            <person name="Lajus A."/>
            <person name="Zhou Y."/>
            <person name="Gourion B."/>
            <person name="Barbe V."/>
            <person name="Chang J."/>
            <person name="Cruveiller S."/>
            <person name="Dossat C."/>
            <person name="Gillett W."/>
            <person name="Gruffaz C."/>
            <person name="Haugen E."/>
            <person name="Hourcade E."/>
            <person name="Levy R."/>
            <person name="Mangenot S."/>
            <person name="Muller E."/>
            <person name="Nadalig T."/>
            <person name="Pagni M."/>
            <person name="Penny C."/>
            <person name="Peyraud R."/>
            <person name="Robinson D.G."/>
            <person name="Roche D."/>
            <person name="Rouy Z."/>
            <person name="Saenampechek C."/>
            <person name="Salvignol G."/>
            <person name="Vallenet D."/>
            <person name="Wu Z."/>
            <person name="Marx C.J."/>
            <person name="Vorholt J.A."/>
            <person name="Olson M.V."/>
            <person name="Kaul R."/>
            <person name="Weissenbach J."/>
            <person name="Medigue C."/>
            <person name="Lidstrom M.E."/>
        </authorList>
    </citation>
    <scope>NUCLEOTIDE SEQUENCE [LARGE SCALE GENOMIC DNA]</scope>
    <source>
        <strain>DSM 6343 / CIP 106787 / DM4</strain>
    </source>
</reference>
<comment type="function">
    <text>Transcriptional repressor of the dcmA gene and of its own gene.</text>
</comment>
<comment type="subunit">
    <text evidence="2">Monomer.</text>
</comment>
<proteinExistence type="predicted"/>
<keyword id="KW-0238">DNA-binding</keyword>
<keyword id="KW-0678">Repressor</keyword>
<keyword id="KW-0804">Transcription</keyword>
<keyword id="KW-0805">Transcription regulation</keyword>
<dbReference type="EMBL" id="M32346">
    <property type="protein sequence ID" value="AAB68953.1"/>
    <property type="molecule type" value="Genomic_DNA"/>
</dbReference>
<dbReference type="EMBL" id="FP103042">
    <property type="protein sequence ID" value="CAX24311.1"/>
    <property type="molecule type" value="Genomic_DNA"/>
</dbReference>
<dbReference type="PIR" id="A41327">
    <property type="entry name" value="A41327"/>
</dbReference>
<dbReference type="RefSeq" id="WP_013214746.1">
    <property type="nucleotide sequence ID" value="NC_012988.1"/>
</dbReference>
<dbReference type="SMR" id="P45876"/>
<dbReference type="GeneID" id="72992851"/>
<dbReference type="KEGG" id="mdi:METDI2655"/>
<dbReference type="HOGENOM" id="CLU_1052957_0_0_5"/>
<dbReference type="Proteomes" id="UP000008070">
    <property type="component" value="Chromosome"/>
</dbReference>
<dbReference type="GO" id="GO:0003677">
    <property type="term" value="F:DNA binding"/>
    <property type="evidence" value="ECO:0007669"/>
    <property type="project" value="UniProtKB-KW"/>
</dbReference>
<dbReference type="Gene3D" id="1.10.1660.10">
    <property type="match status" value="1"/>
</dbReference>
<dbReference type="InterPro" id="IPR009061">
    <property type="entry name" value="DNA-bd_dom_put_sf"/>
</dbReference>
<dbReference type="InterPro" id="IPR041657">
    <property type="entry name" value="HTH_17"/>
</dbReference>
<dbReference type="InterPro" id="IPR025847">
    <property type="entry name" value="MEDS_domain"/>
</dbReference>
<dbReference type="InterPro" id="IPR010093">
    <property type="entry name" value="SinI_DNA-bd"/>
</dbReference>
<dbReference type="NCBIfam" id="TIGR01764">
    <property type="entry name" value="excise"/>
    <property type="match status" value="1"/>
</dbReference>
<dbReference type="Pfam" id="PF12728">
    <property type="entry name" value="HTH_17"/>
    <property type="match status" value="1"/>
</dbReference>
<dbReference type="Pfam" id="PF14417">
    <property type="entry name" value="MEDS"/>
    <property type="match status" value="1"/>
</dbReference>
<dbReference type="SUPFAM" id="SSF46955">
    <property type="entry name" value="Putative DNA-binding domain"/>
    <property type="match status" value="1"/>
</dbReference>
<protein>
    <recommendedName>
        <fullName>Transcriptional repressor DcmR</fullName>
    </recommendedName>
</protein>
<feature type="chain" id="PRO_0000079815" description="Transcriptional repressor DcmR">
    <location>
        <begin position="1"/>
        <end position="265"/>
    </location>
</feature>
<feature type="DNA-binding region" description="H-T-H motif" evidence="1">
    <location>
        <begin position="17"/>
        <end position="36"/>
    </location>
</feature>
<organism>
    <name type="scientific">Methylorubrum extorquens (strain DSM 6343 / CIP 106787 / DM4)</name>
    <name type="common">Methylobacterium extorquens</name>
    <dbReference type="NCBI Taxonomy" id="661410"/>
    <lineage>
        <taxon>Bacteria</taxon>
        <taxon>Pseudomonadati</taxon>
        <taxon>Pseudomonadota</taxon>
        <taxon>Alphaproteobacteria</taxon>
        <taxon>Hyphomicrobiales</taxon>
        <taxon>Methylobacteriaceae</taxon>
        <taxon>Methylorubrum</taxon>
    </lineage>
</organism>
<sequence>MTKERSRAAKRSEEELLDIKQAASLLNVSEASLRRWTDSGKLPCYRVGDQRARRFRREDLVAFVSVSQETASPAQGADRPDSVKNAAKTQVAGMDIAYHDHICAIYGRPAGRLKLSVPLLREGLKAGDICFLNATQPGKAHILKVLREVYPDVHKAIKDGQLIFPALKRNKAEMLDQLEEMFLKATYSGEQKLRLVGDMEWALSVDWSEQEVYEYELEYNNTLGHRFPIISLCQYDVRVFSSKGILDALKSHEDTYKYPLRDCCI</sequence>
<gene>
    <name type="primary">dcmR</name>
    <name type="ordered locus">METDI2655</name>
</gene>
<name>DCMR_METED</name>
<evidence type="ECO:0000250" key="1"/>
<evidence type="ECO:0000305" key="2"/>